<gene>
    <name type="primary">Wdr5b</name>
</gene>
<keyword id="KW-1185">Reference proteome</keyword>
<keyword id="KW-0677">Repeat</keyword>
<keyword id="KW-0833">Ubl conjugation pathway</keyword>
<keyword id="KW-0853">WD repeat</keyword>
<protein>
    <recommendedName>
        <fullName>WD repeat-containing protein 5B</fullName>
    </recommendedName>
</protein>
<accession>Q4V8C4</accession>
<sequence length="328" mass="36049">MATEHLPAERAQSPLSAPQRVEEPQKPNYALRLTLAGHSAAISSVKFSPNGEWLASSAADALIIIWGAYDGKCKKTLYGHSLEISDVAWSSDSSRLVSASDDKTLKLWDVRSGKCLKTLKGHSDFVFCCDFNPPSNLIVSGSFDESVKIWEVKTGKCLKTLSAHSDPISAVHFHCNGSLIVSGSYDGLCRIWDAASGQCLRTLADEGNPPVSFVKFSPNGKYILTATLDSTLKLWDYSRGRCLKTYTGHKNEKYCIFASFSVTGRKWVVSGSEDNMVYIWNLQTKEIVQRLQGHTDVVISAACHPTENIIASAALENDKTIKIWSSDY</sequence>
<reference key="1">
    <citation type="journal article" date="2004" name="Genome Res.">
        <title>The status, quality, and expansion of the NIH full-length cDNA project: the Mammalian Gene Collection (MGC).</title>
        <authorList>
            <consortium name="The MGC Project Team"/>
        </authorList>
    </citation>
    <scope>NUCLEOTIDE SEQUENCE [LARGE SCALE MRNA]</scope>
    <source>
        <tissue>Testis</tissue>
    </source>
</reference>
<organism>
    <name type="scientific">Rattus norvegicus</name>
    <name type="common">Rat</name>
    <dbReference type="NCBI Taxonomy" id="10116"/>
    <lineage>
        <taxon>Eukaryota</taxon>
        <taxon>Metazoa</taxon>
        <taxon>Chordata</taxon>
        <taxon>Craniata</taxon>
        <taxon>Vertebrata</taxon>
        <taxon>Euteleostomi</taxon>
        <taxon>Mammalia</taxon>
        <taxon>Eutheria</taxon>
        <taxon>Euarchontoglires</taxon>
        <taxon>Glires</taxon>
        <taxon>Rodentia</taxon>
        <taxon>Myomorpha</taxon>
        <taxon>Muroidea</taxon>
        <taxon>Muridae</taxon>
        <taxon>Murinae</taxon>
        <taxon>Rattus</taxon>
    </lineage>
</organism>
<comment type="function">
    <text evidence="1">May function as a substrate receptor for CUL4-DDB1 ubiquitin E3 ligase complex.</text>
</comment>
<comment type="subunit">
    <text evidence="1">Probable part of a cullin-RING E3 protein ligase complex containing CUL4B-DDB1 and a substrate-recruiting component (DCAF). Interacts with CUL4B and DDB1 (By similarity).</text>
</comment>
<comment type="similarity">
    <text evidence="3">Belongs to the WD repeat WDR5/wds family.</text>
</comment>
<feature type="chain" id="PRO_0000278464" description="WD repeat-containing protein 5B">
    <location>
        <begin position="1"/>
        <end position="328"/>
    </location>
</feature>
<feature type="repeat" description="WD 1">
    <location>
        <begin position="37"/>
        <end position="76"/>
    </location>
</feature>
<feature type="repeat" description="WD 2">
    <location>
        <begin position="79"/>
        <end position="120"/>
    </location>
</feature>
<feature type="repeat" description="WD 3">
    <location>
        <begin position="122"/>
        <end position="162"/>
    </location>
</feature>
<feature type="repeat" description="WD 4">
    <location>
        <begin position="163"/>
        <end position="202"/>
    </location>
</feature>
<feature type="repeat" description="WD 5">
    <location>
        <begin position="206"/>
        <end position="247"/>
    </location>
</feature>
<feature type="repeat" description="WD 6">
    <location>
        <begin position="250"/>
        <end position="290"/>
    </location>
</feature>
<feature type="repeat" description="WD 7">
    <location>
        <begin position="293"/>
        <end position="328"/>
    </location>
</feature>
<feature type="region of interest" description="Disordered" evidence="2">
    <location>
        <begin position="1"/>
        <end position="23"/>
    </location>
</feature>
<feature type="short sequence motif" description="DDB1-binding motif">
    <location>
        <begin position="186"/>
        <end position="190"/>
    </location>
</feature>
<proteinExistence type="evidence at transcript level"/>
<evidence type="ECO:0000250" key="1"/>
<evidence type="ECO:0000256" key="2">
    <source>
        <dbReference type="SAM" id="MobiDB-lite"/>
    </source>
</evidence>
<evidence type="ECO:0000305" key="3"/>
<name>WDR5B_RAT</name>
<dbReference type="EMBL" id="BC097449">
    <property type="protein sequence ID" value="AAH97449.1"/>
    <property type="molecule type" value="mRNA"/>
</dbReference>
<dbReference type="RefSeq" id="NP_001019937.1">
    <property type="nucleotide sequence ID" value="NM_001024766.1"/>
</dbReference>
<dbReference type="SMR" id="Q4V8C4"/>
<dbReference type="FunCoup" id="Q4V8C4">
    <property type="interactions" value="1407"/>
</dbReference>
<dbReference type="STRING" id="10116.ENSRNOP00000003068"/>
<dbReference type="iPTMnet" id="Q4V8C4"/>
<dbReference type="PhosphoSitePlus" id="Q4V8C4"/>
<dbReference type="PaxDb" id="10116-ENSRNOP00000003068"/>
<dbReference type="Ensembl" id="ENSRNOT00000003068.4">
    <property type="protein sequence ID" value="ENSRNOP00000003068.2"/>
    <property type="gene ID" value="ENSRNOG00000002253.4"/>
</dbReference>
<dbReference type="GeneID" id="303907"/>
<dbReference type="KEGG" id="rno:303907"/>
<dbReference type="UCSC" id="RGD:1308567">
    <property type="organism name" value="rat"/>
</dbReference>
<dbReference type="AGR" id="RGD:1308567"/>
<dbReference type="CTD" id="54554"/>
<dbReference type="RGD" id="1308567">
    <property type="gene designation" value="Wdr5b"/>
</dbReference>
<dbReference type="eggNOG" id="KOG0266">
    <property type="taxonomic scope" value="Eukaryota"/>
</dbReference>
<dbReference type="GeneTree" id="ENSGT00940000154143"/>
<dbReference type="HOGENOM" id="CLU_000288_57_1_1"/>
<dbReference type="InParanoid" id="Q4V8C4"/>
<dbReference type="OMA" id="NYALKCT"/>
<dbReference type="OrthoDB" id="674604at2759"/>
<dbReference type="PhylomeDB" id="Q4V8C4"/>
<dbReference type="TreeFam" id="TF314125"/>
<dbReference type="PRO" id="PR:Q4V8C4"/>
<dbReference type="Proteomes" id="UP000002494">
    <property type="component" value="Chromosome 11"/>
</dbReference>
<dbReference type="Bgee" id="ENSRNOG00000002253">
    <property type="expression patterns" value="Expressed in testis and 19 other cell types or tissues"/>
</dbReference>
<dbReference type="GO" id="GO:0048188">
    <property type="term" value="C:Set1C/COMPASS complex"/>
    <property type="evidence" value="ECO:0000318"/>
    <property type="project" value="GO_Central"/>
</dbReference>
<dbReference type="GO" id="GO:0042393">
    <property type="term" value="F:histone binding"/>
    <property type="evidence" value="ECO:0000318"/>
    <property type="project" value="GO_Central"/>
</dbReference>
<dbReference type="CDD" id="cd00200">
    <property type="entry name" value="WD40"/>
    <property type="match status" value="1"/>
</dbReference>
<dbReference type="FunFam" id="2.130.10.10:FF:000029">
    <property type="entry name" value="WD repeat-containing protein 5"/>
    <property type="match status" value="1"/>
</dbReference>
<dbReference type="Gene3D" id="2.130.10.10">
    <property type="entry name" value="YVTN repeat-like/Quinoprotein amine dehydrogenase"/>
    <property type="match status" value="1"/>
</dbReference>
<dbReference type="InterPro" id="IPR020472">
    <property type="entry name" value="G-protein_beta_WD-40_rep"/>
</dbReference>
<dbReference type="InterPro" id="IPR015943">
    <property type="entry name" value="WD40/YVTN_repeat-like_dom_sf"/>
</dbReference>
<dbReference type="InterPro" id="IPR019775">
    <property type="entry name" value="WD40_repeat_CS"/>
</dbReference>
<dbReference type="InterPro" id="IPR036322">
    <property type="entry name" value="WD40_repeat_dom_sf"/>
</dbReference>
<dbReference type="InterPro" id="IPR001680">
    <property type="entry name" value="WD40_rpt"/>
</dbReference>
<dbReference type="PANTHER" id="PTHR19879:SF1">
    <property type="entry name" value="CANNONBALL-RELATED"/>
    <property type="match status" value="1"/>
</dbReference>
<dbReference type="PANTHER" id="PTHR19879">
    <property type="entry name" value="TRANSCRIPTION INITIATION FACTOR TFIID"/>
    <property type="match status" value="1"/>
</dbReference>
<dbReference type="Pfam" id="PF25175">
    <property type="entry name" value="Beta-prop_WDR5"/>
    <property type="match status" value="1"/>
</dbReference>
<dbReference type="PIRSF" id="PIRSF002394">
    <property type="entry name" value="GN-bd_beta"/>
    <property type="match status" value="1"/>
</dbReference>
<dbReference type="PRINTS" id="PR00320">
    <property type="entry name" value="GPROTEINBRPT"/>
</dbReference>
<dbReference type="SMART" id="SM00320">
    <property type="entry name" value="WD40"/>
    <property type="match status" value="7"/>
</dbReference>
<dbReference type="SUPFAM" id="SSF50978">
    <property type="entry name" value="WD40 repeat-like"/>
    <property type="match status" value="1"/>
</dbReference>
<dbReference type="PROSITE" id="PS00678">
    <property type="entry name" value="WD_REPEATS_1"/>
    <property type="match status" value="4"/>
</dbReference>
<dbReference type="PROSITE" id="PS50082">
    <property type="entry name" value="WD_REPEATS_2"/>
    <property type="match status" value="6"/>
</dbReference>
<dbReference type="PROSITE" id="PS50294">
    <property type="entry name" value="WD_REPEATS_REGION"/>
    <property type="match status" value="1"/>
</dbReference>